<reference key="1">
    <citation type="journal article" date="2000" name="Science">
        <title>Complete genome sequence of Neisseria meningitidis serogroup B strain MC58.</title>
        <authorList>
            <person name="Tettelin H."/>
            <person name="Saunders N.J."/>
            <person name="Heidelberg J.F."/>
            <person name="Jeffries A.C."/>
            <person name="Nelson K.E."/>
            <person name="Eisen J.A."/>
            <person name="Ketchum K.A."/>
            <person name="Hood D.W."/>
            <person name="Peden J.F."/>
            <person name="Dodson R.J."/>
            <person name="Nelson W.C."/>
            <person name="Gwinn M.L."/>
            <person name="DeBoy R.T."/>
            <person name="Peterson J.D."/>
            <person name="Hickey E.K."/>
            <person name="Haft D.H."/>
            <person name="Salzberg S.L."/>
            <person name="White O."/>
            <person name="Fleischmann R.D."/>
            <person name="Dougherty B.A."/>
            <person name="Mason T.M."/>
            <person name="Ciecko A."/>
            <person name="Parksey D.S."/>
            <person name="Blair E."/>
            <person name="Cittone H."/>
            <person name="Clark E.B."/>
            <person name="Cotton M.D."/>
            <person name="Utterback T.R."/>
            <person name="Khouri H.M."/>
            <person name="Qin H."/>
            <person name="Vamathevan J.J."/>
            <person name="Gill J."/>
            <person name="Scarlato V."/>
            <person name="Masignani V."/>
            <person name="Pizza M."/>
            <person name="Grandi G."/>
            <person name="Sun L."/>
            <person name="Smith H.O."/>
            <person name="Fraser C.M."/>
            <person name="Moxon E.R."/>
            <person name="Rappuoli R."/>
            <person name="Venter J.C."/>
        </authorList>
    </citation>
    <scope>NUCLEOTIDE SEQUENCE [LARGE SCALE GENOMIC DNA]</scope>
    <source>
        <strain>ATCC BAA-335 / MC58</strain>
    </source>
</reference>
<protein>
    <recommendedName>
        <fullName evidence="1">Inorganic pyrophosphatase</fullName>
        <ecNumber evidence="1">3.6.1.1</ecNumber>
    </recommendedName>
    <alternativeName>
        <fullName evidence="1">Pyrophosphate phospho-hydrolase</fullName>
        <shortName evidence="1">PPase</shortName>
    </alternativeName>
</protein>
<gene>
    <name evidence="1" type="primary">ppa</name>
    <name type="ordered locus">NMB0641</name>
</gene>
<comment type="function">
    <text evidence="1">Catalyzes the hydrolysis of inorganic pyrophosphate (PPi) forming two phosphate ions.</text>
</comment>
<comment type="catalytic activity">
    <reaction evidence="1">
        <text>diphosphate + H2O = 2 phosphate + H(+)</text>
        <dbReference type="Rhea" id="RHEA:24576"/>
        <dbReference type="ChEBI" id="CHEBI:15377"/>
        <dbReference type="ChEBI" id="CHEBI:15378"/>
        <dbReference type="ChEBI" id="CHEBI:33019"/>
        <dbReference type="ChEBI" id="CHEBI:43474"/>
        <dbReference type="EC" id="3.6.1.1"/>
    </reaction>
</comment>
<comment type="cofactor">
    <cofactor evidence="1">
        <name>Mg(2+)</name>
        <dbReference type="ChEBI" id="CHEBI:18420"/>
    </cofactor>
</comment>
<comment type="subunit">
    <text evidence="1">Homohexamer.</text>
</comment>
<comment type="subcellular location">
    <subcellularLocation>
        <location evidence="1">Cytoplasm</location>
    </subcellularLocation>
</comment>
<comment type="similarity">
    <text evidence="1">Belongs to the PPase family.</text>
</comment>
<keyword id="KW-0002">3D-structure</keyword>
<keyword id="KW-0963">Cytoplasm</keyword>
<keyword id="KW-0378">Hydrolase</keyword>
<keyword id="KW-0460">Magnesium</keyword>
<keyword id="KW-0479">Metal-binding</keyword>
<keyword id="KW-1185">Reference proteome</keyword>
<name>IPYR_NEIMB</name>
<dbReference type="EC" id="3.6.1.1" evidence="1"/>
<dbReference type="EMBL" id="AE002098">
    <property type="protein sequence ID" value="AAF41064.1"/>
    <property type="molecule type" value="Genomic_DNA"/>
</dbReference>
<dbReference type="PIR" id="F81175">
    <property type="entry name" value="F81175"/>
</dbReference>
<dbReference type="RefSeq" id="NP_273684.1">
    <property type="nucleotide sequence ID" value="NC_003112.2"/>
</dbReference>
<dbReference type="RefSeq" id="WP_002219633.1">
    <property type="nucleotide sequence ID" value="NC_003112.2"/>
</dbReference>
<dbReference type="PDB" id="5TEA">
    <property type="method" value="X-ray"/>
    <property type="resolution" value="1.85 A"/>
    <property type="chains" value="A/B/C/D/E/F=1-177"/>
</dbReference>
<dbReference type="PDBsum" id="5TEA"/>
<dbReference type="SMR" id="Q9K0G4"/>
<dbReference type="FunCoup" id="Q9K0G4">
    <property type="interactions" value="354"/>
</dbReference>
<dbReference type="STRING" id="122586.NMB0641"/>
<dbReference type="PaxDb" id="122586-NMB0641"/>
<dbReference type="KEGG" id="nme:NMB0641"/>
<dbReference type="PATRIC" id="fig|122586.8.peg.810"/>
<dbReference type="HOGENOM" id="CLU_073198_1_2_4"/>
<dbReference type="InParanoid" id="Q9K0G4"/>
<dbReference type="OrthoDB" id="5187599at2"/>
<dbReference type="Proteomes" id="UP000000425">
    <property type="component" value="Chromosome"/>
</dbReference>
<dbReference type="GO" id="GO:0005829">
    <property type="term" value="C:cytosol"/>
    <property type="evidence" value="ECO:0000318"/>
    <property type="project" value="GO_Central"/>
</dbReference>
<dbReference type="GO" id="GO:0004427">
    <property type="term" value="F:inorganic diphosphate phosphatase activity"/>
    <property type="evidence" value="ECO:0000318"/>
    <property type="project" value="GO_Central"/>
</dbReference>
<dbReference type="GO" id="GO:0000287">
    <property type="term" value="F:magnesium ion binding"/>
    <property type="evidence" value="ECO:0000318"/>
    <property type="project" value="GO_Central"/>
</dbReference>
<dbReference type="GO" id="GO:0006796">
    <property type="term" value="P:phosphate-containing compound metabolic process"/>
    <property type="evidence" value="ECO:0000318"/>
    <property type="project" value="GO_Central"/>
</dbReference>
<dbReference type="CDD" id="cd00412">
    <property type="entry name" value="pyrophosphatase"/>
    <property type="match status" value="1"/>
</dbReference>
<dbReference type="FunFam" id="3.90.80.10:FF:000006">
    <property type="entry name" value="Inorganic pyrophosphatase"/>
    <property type="match status" value="1"/>
</dbReference>
<dbReference type="Gene3D" id="3.90.80.10">
    <property type="entry name" value="Inorganic pyrophosphatase"/>
    <property type="match status" value="1"/>
</dbReference>
<dbReference type="HAMAP" id="MF_00209">
    <property type="entry name" value="Inorganic_PPase"/>
    <property type="match status" value="1"/>
</dbReference>
<dbReference type="InterPro" id="IPR008162">
    <property type="entry name" value="Pyrophosphatase"/>
</dbReference>
<dbReference type="InterPro" id="IPR036649">
    <property type="entry name" value="Pyrophosphatase_sf"/>
</dbReference>
<dbReference type="PANTHER" id="PTHR10286">
    <property type="entry name" value="INORGANIC PYROPHOSPHATASE"/>
    <property type="match status" value="1"/>
</dbReference>
<dbReference type="Pfam" id="PF00719">
    <property type="entry name" value="Pyrophosphatase"/>
    <property type="match status" value="1"/>
</dbReference>
<dbReference type="SUPFAM" id="SSF50324">
    <property type="entry name" value="Inorganic pyrophosphatase"/>
    <property type="match status" value="1"/>
</dbReference>
<dbReference type="PROSITE" id="PS00387">
    <property type="entry name" value="PPASE"/>
    <property type="match status" value="1"/>
</dbReference>
<organism>
    <name type="scientific">Neisseria meningitidis serogroup B (strain ATCC BAA-335 / MC58)</name>
    <dbReference type="NCBI Taxonomy" id="122586"/>
    <lineage>
        <taxon>Bacteria</taxon>
        <taxon>Pseudomonadati</taxon>
        <taxon>Pseudomonadota</taxon>
        <taxon>Betaproteobacteria</taxon>
        <taxon>Neisseriales</taxon>
        <taxon>Neisseriaceae</taxon>
        <taxon>Neisseria</taxon>
    </lineage>
</organism>
<sequence length="177" mass="19811">MADFNQILTPGDVDGGIINVVNEIPAGSNHKIEWNRKLAAFQLDRVEPAIFAKPTNYGFIPQTLDEDGDELDVLLVTEQPLATGVFLEARVIGVMKFVDDGEVDDKIVCVPADDRNNGNAYKTLSDLPQQLIKQIEFHFNHYKDLKKAGTTKVESWGDAEEAKKVIKESIERWNKQA</sequence>
<evidence type="ECO:0000255" key="1">
    <source>
        <dbReference type="HAMAP-Rule" id="MF_00209"/>
    </source>
</evidence>
<evidence type="ECO:0007829" key="2">
    <source>
        <dbReference type="PDB" id="5TEA"/>
    </source>
</evidence>
<feature type="chain" id="PRO_0000137515" description="Inorganic pyrophosphatase">
    <location>
        <begin position="1"/>
        <end position="177"/>
    </location>
</feature>
<feature type="binding site" evidence="1">
    <location>
        <position position="31"/>
    </location>
    <ligand>
        <name>substrate</name>
    </ligand>
</feature>
<feature type="binding site" evidence="1">
    <location>
        <position position="45"/>
    </location>
    <ligand>
        <name>substrate</name>
    </ligand>
</feature>
<feature type="binding site" evidence="1">
    <location>
        <position position="57"/>
    </location>
    <ligand>
        <name>substrate</name>
    </ligand>
</feature>
<feature type="binding site" evidence="1">
    <location>
        <position position="67"/>
    </location>
    <ligand>
        <name>Mg(2+)</name>
        <dbReference type="ChEBI" id="CHEBI:18420"/>
        <label>1</label>
    </ligand>
</feature>
<feature type="binding site" evidence="1">
    <location>
        <position position="72"/>
    </location>
    <ligand>
        <name>Mg(2+)</name>
        <dbReference type="ChEBI" id="CHEBI:18420"/>
        <label>1</label>
    </ligand>
</feature>
<feature type="binding site" evidence="1">
    <location>
        <position position="72"/>
    </location>
    <ligand>
        <name>Mg(2+)</name>
        <dbReference type="ChEBI" id="CHEBI:18420"/>
        <label>2</label>
    </ligand>
</feature>
<feature type="binding site" evidence="1">
    <location>
        <position position="104"/>
    </location>
    <ligand>
        <name>Mg(2+)</name>
        <dbReference type="ChEBI" id="CHEBI:18420"/>
        <label>1</label>
    </ligand>
</feature>
<feature type="binding site" evidence="1">
    <location>
        <position position="142"/>
    </location>
    <ligand>
        <name>substrate</name>
    </ligand>
</feature>
<feature type="turn" evidence="2">
    <location>
        <begin position="5"/>
        <end position="7"/>
    </location>
</feature>
<feature type="turn" evidence="2">
    <location>
        <begin position="13"/>
        <end position="16"/>
    </location>
</feature>
<feature type="strand" evidence="2">
    <location>
        <begin position="17"/>
        <end position="24"/>
    </location>
</feature>
<feature type="strand" evidence="2">
    <location>
        <begin position="30"/>
        <end position="35"/>
    </location>
</feature>
<feature type="turn" evidence="2">
    <location>
        <begin position="36"/>
        <end position="39"/>
    </location>
</feature>
<feature type="strand" evidence="2">
    <location>
        <begin position="40"/>
        <end position="46"/>
    </location>
</feature>
<feature type="helix" evidence="2">
    <location>
        <begin position="49"/>
        <end position="51"/>
    </location>
</feature>
<feature type="strand" evidence="2">
    <location>
        <begin position="54"/>
        <end position="60"/>
    </location>
</feature>
<feature type="strand" evidence="2">
    <location>
        <begin position="71"/>
        <end position="75"/>
    </location>
</feature>
<feature type="strand" evidence="2">
    <location>
        <begin position="86"/>
        <end position="99"/>
    </location>
</feature>
<feature type="strand" evidence="2">
    <location>
        <begin position="106"/>
        <end position="114"/>
    </location>
</feature>
<feature type="turn" evidence="2">
    <location>
        <begin position="115"/>
        <end position="118"/>
    </location>
</feature>
<feature type="helix" evidence="2">
    <location>
        <begin position="124"/>
        <end position="126"/>
    </location>
</feature>
<feature type="helix" evidence="2">
    <location>
        <begin position="129"/>
        <end position="141"/>
    </location>
</feature>
<feature type="turn" evidence="2">
    <location>
        <begin position="142"/>
        <end position="146"/>
    </location>
</feature>
<feature type="strand" evidence="2">
    <location>
        <begin position="150"/>
        <end position="157"/>
    </location>
</feature>
<feature type="helix" evidence="2">
    <location>
        <begin position="159"/>
        <end position="175"/>
    </location>
</feature>
<accession>Q9K0G4</accession>
<proteinExistence type="evidence at protein level"/>